<gene>
    <name type="primary">MMT1</name>
    <name type="synonym">MMT</name>
    <name type="ordered locus">At5g49810</name>
    <name type="ORF">K21G20.2</name>
</gene>
<proteinExistence type="evidence at protein level"/>
<feature type="initiator methionine" description="Removed" evidence="6">
    <location>
        <position position="1"/>
    </location>
</feature>
<feature type="chain" id="PRO_0000204460" description="Methionine S-methyltransferase">
    <location>
        <begin position="2"/>
        <end position="1071"/>
    </location>
</feature>
<feature type="modified residue" description="N-acetylalanine" evidence="6">
    <location>
        <position position="2"/>
    </location>
</feature>
<feature type="sequence conflict" description="In Ref. 1; AAD49574." evidence="5" ref="1">
    <original>I</original>
    <variation>V</variation>
    <location>
        <position position="269"/>
    </location>
</feature>
<feature type="sequence conflict" description="In Ref. 1; AAD49574." evidence="5" ref="1">
    <original>K</original>
    <variation>R</variation>
    <location>
        <position position="813"/>
    </location>
</feature>
<feature type="sequence conflict" description="In Ref. 1; AAD49574." evidence="5" ref="1">
    <original>M</original>
    <variation>L</variation>
    <location>
        <position position="885"/>
    </location>
</feature>
<feature type="sequence conflict" description="In Ref. 1; AAD49574." evidence="5" ref="1">
    <original>L</original>
    <variation>F</variation>
    <location>
        <position position="889"/>
    </location>
</feature>
<feature type="sequence conflict" description="In Ref. 1; AAD49574." evidence="5" ref="1">
    <original>R</original>
    <variation>K</variation>
    <location>
        <position position="968"/>
    </location>
</feature>
<name>MMT1_ARATH</name>
<organism>
    <name type="scientific">Arabidopsis thaliana</name>
    <name type="common">Mouse-ear cress</name>
    <dbReference type="NCBI Taxonomy" id="3702"/>
    <lineage>
        <taxon>Eukaryota</taxon>
        <taxon>Viridiplantae</taxon>
        <taxon>Streptophyta</taxon>
        <taxon>Embryophyta</taxon>
        <taxon>Tracheophyta</taxon>
        <taxon>Spermatophyta</taxon>
        <taxon>Magnoliopsida</taxon>
        <taxon>eudicotyledons</taxon>
        <taxon>Gunneridae</taxon>
        <taxon>Pentapetalae</taxon>
        <taxon>rosids</taxon>
        <taxon>malvids</taxon>
        <taxon>Brassicales</taxon>
        <taxon>Brassicaceae</taxon>
        <taxon>Camelineae</taxon>
        <taxon>Arabidopsis</taxon>
    </lineage>
</organism>
<reference key="1">
    <citation type="journal article" date="1999" name="Plant Cell">
        <title>S-methylmethionine plays a major role in phloem sulfur transport and is synthesized by a novel type of methyltransferase.</title>
        <authorList>
            <person name="Bourgis F."/>
            <person name="Roje S."/>
            <person name="Nuccio M.L."/>
            <person name="Fisher D.B."/>
            <person name="Tarczynski M.C."/>
            <person name="Li C."/>
            <person name="Herschbach C."/>
            <person name="Rennenberg H."/>
            <person name="Pimenta M.J."/>
            <person name="Shen T.-L."/>
            <person name="Gage D.A."/>
            <person name="Hanson A.D."/>
        </authorList>
    </citation>
    <scope>NUCLEOTIDE SEQUENCE [MRNA]</scope>
    <scope>FUNCTION</scope>
    <scope>ENZYME ACTIVITY</scope>
    <source>
        <strain>cv. Landsberg erecta</strain>
    </source>
</reference>
<reference key="2">
    <citation type="submission" date="1999-04" db="EMBL/GenBank/DDBJ databases">
        <title>Structural analysis of Arabidopsis thaliana chromosome 5. XI.</title>
        <authorList>
            <person name="Kaneko T."/>
            <person name="Katoh T."/>
            <person name="Asamizu E."/>
            <person name="Sato S."/>
            <person name="Nakamura Y."/>
            <person name="Kotani H."/>
            <person name="Tabata S."/>
        </authorList>
    </citation>
    <scope>NUCLEOTIDE SEQUENCE [LARGE SCALE GENOMIC DNA]</scope>
    <source>
        <strain>cv. Columbia</strain>
    </source>
</reference>
<reference key="3">
    <citation type="journal article" date="2017" name="Plant J.">
        <title>Araport11: a complete reannotation of the Arabidopsis thaliana reference genome.</title>
        <authorList>
            <person name="Cheng C.Y."/>
            <person name="Krishnakumar V."/>
            <person name="Chan A.P."/>
            <person name="Thibaud-Nissen F."/>
            <person name="Schobel S."/>
            <person name="Town C.D."/>
        </authorList>
    </citation>
    <scope>GENOME REANNOTATION</scope>
    <source>
        <strain>cv. Columbia</strain>
    </source>
</reference>
<reference key="4">
    <citation type="journal article" date="2003" name="Science">
        <title>Empirical analysis of transcriptional activity in the Arabidopsis genome.</title>
        <authorList>
            <person name="Yamada K."/>
            <person name="Lim J."/>
            <person name="Dale J.M."/>
            <person name="Chen H."/>
            <person name="Shinn P."/>
            <person name="Palm C.J."/>
            <person name="Southwick A.M."/>
            <person name="Wu H.C."/>
            <person name="Kim C.J."/>
            <person name="Nguyen M."/>
            <person name="Pham P.K."/>
            <person name="Cheuk R.F."/>
            <person name="Karlin-Newmann G."/>
            <person name="Liu S.X."/>
            <person name="Lam B."/>
            <person name="Sakano H."/>
            <person name="Wu T."/>
            <person name="Yu G."/>
            <person name="Miranda M."/>
            <person name="Quach H.L."/>
            <person name="Tripp M."/>
            <person name="Chang C.H."/>
            <person name="Lee J.M."/>
            <person name="Toriumi M.J."/>
            <person name="Chan M.M."/>
            <person name="Tang C.C."/>
            <person name="Onodera C.S."/>
            <person name="Deng J.M."/>
            <person name="Akiyama K."/>
            <person name="Ansari Y."/>
            <person name="Arakawa T."/>
            <person name="Banh J."/>
            <person name="Banno F."/>
            <person name="Bowser L."/>
            <person name="Brooks S.Y."/>
            <person name="Carninci P."/>
            <person name="Chao Q."/>
            <person name="Choy N."/>
            <person name="Enju A."/>
            <person name="Goldsmith A.D."/>
            <person name="Gurjal M."/>
            <person name="Hansen N.F."/>
            <person name="Hayashizaki Y."/>
            <person name="Johnson-Hopson C."/>
            <person name="Hsuan V.W."/>
            <person name="Iida K."/>
            <person name="Karnes M."/>
            <person name="Khan S."/>
            <person name="Koesema E."/>
            <person name="Ishida J."/>
            <person name="Jiang P.X."/>
            <person name="Jones T."/>
            <person name="Kawai J."/>
            <person name="Kamiya A."/>
            <person name="Meyers C."/>
            <person name="Nakajima M."/>
            <person name="Narusaka M."/>
            <person name="Seki M."/>
            <person name="Sakurai T."/>
            <person name="Satou M."/>
            <person name="Tamse R."/>
            <person name="Vaysberg M."/>
            <person name="Wallender E.K."/>
            <person name="Wong C."/>
            <person name="Yamamura Y."/>
            <person name="Yuan S."/>
            <person name="Shinozaki K."/>
            <person name="Davis R.W."/>
            <person name="Theologis A."/>
            <person name="Ecker J.R."/>
        </authorList>
    </citation>
    <scope>NUCLEOTIDE SEQUENCE [LARGE SCALE MRNA]</scope>
    <source>
        <strain>cv. Columbia</strain>
    </source>
</reference>
<reference key="5">
    <citation type="journal article" date="2002" name="Plant Physiol.">
        <title>An essential role of s-adenosyl-L-methionine:L-methionine s-methyltransferase in selenium volatilization by plants. Methylation of selenomethionine to selenium-methyl-L-selenium-methionine, the precursor of volatile selenium.</title>
        <authorList>
            <person name="Tagmount A."/>
            <person name="Berken A."/>
            <person name="Terry N."/>
        </authorList>
    </citation>
    <scope>FUNCTION</scope>
</reference>
<reference key="6">
    <citation type="journal article" date="2001" name="Plant J.">
        <title>The S-methylmethionine cycle in angiosperms: ubiquity, antiquity and activity.</title>
        <authorList>
            <person name="Ranocha P."/>
            <person name="McNeil S.D."/>
            <person name="Ziemak M.J."/>
            <person name="Li C."/>
            <person name="Tarczynski M.C."/>
            <person name="Hanson A.D."/>
        </authorList>
    </citation>
    <scope>TISSUE SPECIFICITY</scope>
</reference>
<reference key="7">
    <citation type="journal article" date="2003" name="Plant Physiol.">
        <title>Insertional inactivation of the methionine s-methyltransferase gene eliminates the s-methylmethionine cycle and increases the methylation ratio.</title>
        <authorList>
            <person name="Kocsis M.G."/>
            <person name="Ranocha P."/>
            <person name="Gage D.A."/>
            <person name="Simon E.S."/>
            <person name="Rhodes D."/>
            <person name="Peel G.J."/>
            <person name="Mellema S."/>
            <person name="Saito K."/>
            <person name="Awazuhara M."/>
            <person name="Li C."/>
            <person name="Meeley R.B."/>
            <person name="Tarczynski M.C."/>
            <person name="Wagner C."/>
            <person name="Hanson A.D."/>
        </authorList>
    </citation>
    <scope>PROBABLE FUNCTION OF SMM CYCLE</scope>
</reference>
<reference key="8">
    <citation type="journal article" date="2007" name="Mol. Cell. Proteomics">
        <title>Multidimensional protein identification technology (MudPIT) analysis of ubiquitinated proteins in plants.</title>
        <authorList>
            <person name="Maor R."/>
            <person name="Jones A."/>
            <person name="Nuehse T.S."/>
            <person name="Studholme D.J."/>
            <person name="Peck S.C."/>
            <person name="Shirasu K."/>
        </authorList>
    </citation>
    <scope>IDENTIFICATION BY MASS SPECTROMETRY [LARGE SCALE ANALYSIS]</scope>
    <source>
        <strain>cv. Landsberg erecta</strain>
    </source>
</reference>
<reference key="9">
    <citation type="journal article" date="2012" name="Mol. Cell. Proteomics">
        <title>Comparative large-scale characterisation of plant vs. mammal proteins reveals similar and idiosyncratic N-alpha acetylation features.</title>
        <authorList>
            <person name="Bienvenut W.V."/>
            <person name="Sumpton D."/>
            <person name="Martinez A."/>
            <person name="Lilla S."/>
            <person name="Espagne C."/>
            <person name="Meinnel T."/>
            <person name="Giglione C."/>
        </authorList>
    </citation>
    <scope>ACETYLATION [LARGE SCALE ANALYSIS] AT ALA-2</scope>
    <scope>CLEAVAGE OF INITIATOR METHIONINE [LARGE SCALE ANALYSIS]</scope>
    <scope>IDENTIFICATION BY MASS SPECTROMETRY [LARGE SCALE ANALYSIS]</scope>
</reference>
<dbReference type="EC" id="2.1.1.12"/>
<dbReference type="EMBL" id="AF137380">
    <property type="protein sequence ID" value="AAD49574.1"/>
    <property type="molecule type" value="mRNA"/>
</dbReference>
<dbReference type="EMBL" id="AB025612">
    <property type="protein sequence ID" value="BAA98148.1"/>
    <property type="molecule type" value="Genomic_DNA"/>
</dbReference>
<dbReference type="EMBL" id="CP002688">
    <property type="protein sequence ID" value="AED95858.1"/>
    <property type="molecule type" value="Genomic_DNA"/>
</dbReference>
<dbReference type="EMBL" id="AY094459">
    <property type="protein sequence ID" value="AAM19829.1"/>
    <property type="molecule type" value="mRNA"/>
</dbReference>
<dbReference type="EMBL" id="BT002664">
    <property type="protein sequence ID" value="AAO11580.1"/>
    <property type="molecule type" value="mRNA"/>
</dbReference>
<dbReference type="PIR" id="T52306">
    <property type="entry name" value="T52306"/>
</dbReference>
<dbReference type="RefSeq" id="NP_199792.1">
    <property type="nucleotide sequence ID" value="NM_124359.4"/>
</dbReference>
<dbReference type="SMR" id="Q9LTB2"/>
<dbReference type="FunCoup" id="Q9LTB2">
    <property type="interactions" value="1812"/>
</dbReference>
<dbReference type="STRING" id="3702.Q9LTB2"/>
<dbReference type="GlyGen" id="Q9LTB2">
    <property type="glycosylation" value="1 site"/>
</dbReference>
<dbReference type="iPTMnet" id="Q9LTB2"/>
<dbReference type="PaxDb" id="3702-AT5G49810.1"/>
<dbReference type="ProteomicsDB" id="237129"/>
<dbReference type="EnsemblPlants" id="AT5G49810.1">
    <property type="protein sequence ID" value="AT5G49810.1"/>
    <property type="gene ID" value="AT5G49810"/>
</dbReference>
<dbReference type="GeneID" id="835044"/>
<dbReference type="Gramene" id="AT5G49810.1">
    <property type="protein sequence ID" value="AT5G49810.1"/>
    <property type="gene ID" value="AT5G49810"/>
</dbReference>
<dbReference type="KEGG" id="ath:AT5G49810"/>
<dbReference type="Araport" id="AT5G49810"/>
<dbReference type="TAIR" id="AT5G49810">
    <property type="gene designation" value="MMT"/>
</dbReference>
<dbReference type="eggNOG" id="ENOG502QS81">
    <property type="taxonomic scope" value="Eukaryota"/>
</dbReference>
<dbReference type="HOGENOM" id="CLU_005080_0_0_1"/>
<dbReference type="InParanoid" id="Q9LTB2"/>
<dbReference type="OMA" id="CFQTYHF"/>
<dbReference type="OrthoDB" id="540004at2759"/>
<dbReference type="PhylomeDB" id="Q9LTB2"/>
<dbReference type="BioCyc" id="ARA:AT5G49810-MONOMER"/>
<dbReference type="PRO" id="PR:Q9LTB2"/>
<dbReference type="Proteomes" id="UP000006548">
    <property type="component" value="Chromosome 5"/>
</dbReference>
<dbReference type="ExpressionAtlas" id="Q9LTB2">
    <property type="expression patterns" value="baseline and differential"/>
</dbReference>
<dbReference type="GO" id="GO:0005829">
    <property type="term" value="C:cytosol"/>
    <property type="evidence" value="ECO:0007005"/>
    <property type="project" value="TAIR"/>
</dbReference>
<dbReference type="GO" id="GO:0009536">
    <property type="term" value="C:plastid"/>
    <property type="evidence" value="ECO:0007005"/>
    <property type="project" value="TAIR"/>
</dbReference>
<dbReference type="GO" id="GO:0030732">
    <property type="term" value="F:methionine S-methyltransferase activity"/>
    <property type="evidence" value="ECO:0007669"/>
    <property type="project" value="UniProtKB-EC"/>
</dbReference>
<dbReference type="GO" id="GO:0030170">
    <property type="term" value="F:pyridoxal phosphate binding"/>
    <property type="evidence" value="ECO:0007669"/>
    <property type="project" value="InterPro"/>
</dbReference>
<dbReference type="GO" id="GO:0008757">
    <property type="term" value="F:S-adenosylmethionine-dependent methyltransferase activity"/>
    <property type="evidence" value="ECO:0000315"/>
    <property type="project" value="TAIR"/>
</dbReference>
<dbReference type="GO" id="GO:0009058">
    <property type="term" value="P:biosynthetic process"/>
    <property type="evidence" value="ECO:0007669"/>
    <property type="project" value="InterPro"/>
</dbReference>
<dbReference type="GO" id="GO:0032259">
    <property type="term" value="P:methylation"/>
    <property type="evidence" value="ECO:0007669"/>
    <property type="project" value="UniProtKB-KW"/>
</dbReference>
<dbReference type="GO" id="GO:0046500">
    <property type="term" value="P:S-adenosylmethionine metabolic process"/>
    <property type="evidence" value="ECO:0000315"/>
    <property type="project" value="TAIR"/>
</dbReference>
<dbReference type="GO" id="GO:0001887">
    <property type="term" value="P:selenium compound metabolic process"/>
    <property type="evidence" value="ECO:0000315"/>
    <property type="project" value="TAIR"/>
</dbReference>
<dbReference type="CDD" id="cd02440">
    <property type="entry name" value="AdoMet_MTases"/>
    <property type="match status" value="1"/>
</dbReference>
<dbReference type="FunFam" id="3.40.50.150:FF:000459">
    <property type="entry name" value="Methionine S-methyltransferase"/>
    <property type="match status" value="1"/>
</dbReference>
<dbReference type="Gene3D" id="3.90.1150.10">
    <property type="entry name" value="Aspartate Aminotransferase, domain 1"/>
    <property type="match status" value="1"/>
</dbReference>
<dbReference type="Gene3D" id="3.40.640.10">
    <property type="entry name" value="Type I PLP-dependent aspartate aminotransferase-like (Major domain)"/>
    <property type="match status" value="1"/>
</dbReference>
<dbReference type="Gene3D" id="3.40.50.150">
    <property type="entry name" value="Vaccinia Virus protein VP39"/>
    <property type="match status" value="1"/>
</dbReference>
<dbReference type="InterPro" id="IPR004839">
    <property type="entry name" value="Aminotransferase_I/II_large"/>
</dbReference>
<dbReference type="InterPro" id="IPR025779">
    <property type="entry name" value="Met_S-MeTrfase"/>
</dbReference>
<dbReference type="InterPro" id="IPR015424">
    <property type="entry name" value="PyrdxlP-dep_Trfase"/>
</dbReference>
<dbReference type="InterPro" id="IPR015421">
    <property type="entry name" value="PyrdxlP-dep_Trfase_major"/>
</dbReference>
<dbReference type="InterPro" id="IPR015422">
    <property type="entry name" value="PyrdxlP-dep_Trfase_small"/>
</dbReference>
<dbReference type="InterPro" id="IPR029063">
    <property type="entry name" value="SAM-dependent_MTases_sf"/>
</dbReference>
<dbReference type="PANTHER" id="PTHR47087">
    <property type="entry name" value="METHIONINE S-METHYLTRANSFERASE"/>
    <property type="match status" value="1"/>
</dbReference>
<dbReference type="PANTHER" id="PTHR47087:SF1">
    <property type="entry name" value="METHIONINE S-METHYLTRANSFERASE"/>
    <property type="match status" value="1"/>
</dbReference>
<dbReference type="Pfam" id="PF00155">
    <property type="entry name" value="Aminotran_1_2"/>
    <property type="match status" value="1"/>
</dbReference>
<dbReference type="Pfam" id="PF06325">
    <property type="entry name" value="PrmA"/>
    <property type="match status" value="1"/>
</dbReference>
<dbReference type="SUPFAM" id="SSF53383">
    <property type="entry name" value="PLP-dependent transferases"/>
    <property type="match status" value="1"/>
</dbReference>
<dbReference type="SUPFAM" id="SSF53335">
    <property type="entry name" value="S-adenosyl-L-methionine-dependent methyltransferases"/>
    <property type="match status" value="1"/>
</dbReference>
<dbReference type="PROSITE" id="PS51555">
    <property type="entry name" value="SAM_MT12"/>
    <property type="match status" value="1"/>
</dbReference>
<keyword id="KW-0007">Acetylation</keyword>
<keyword id="KW-0963">Cytoplasm</keyword>
<keyword id="KW-0489">Methyltransferase</keyword>
<keyword id="KW-1185">Reference proteome</keyword>
<keyword id="KW-0949">S-adenosyl-L-methionine</keyword>
<keyword id="KW-0808">Transferase</keyword>
<protein>
    <recommendedName>
        <fullName>Methionine S-methyltransferase</fullName>
        <ecNumber>2.1.1.12</ecNumber>
    </recommendedName>
    <alternativeName>
        <fullName>AdoMet:Met S-methyltransferase</fullName>
    </alternativeName>
</protein>
<sequence>MADLSSVDEFLNQCKQSGDAAYGALRSVLERLEDPNTRSKARIFLSDIYKRVGSSETSLQTYHFHIQDIYLDQYEGFQSRKKLTMMVIPSIFIPEDWSFTFYEGLNRHPDTIFKDKTVSELGCGNGWISIAIAAKWLPSKVYGLDINPRAVKISWINLYLNALDDNGEPVYDEEKKTLLDRVEFYESDLLGYCRDNKIQLERIVGCIPQILNPNPEAMSKLITENASEEFLHSLSNYCALQGFVEDQFGLGLIARAVEEGISVIKPAGIMIFNMGGRPGQGVCRRLFERRGVRVTQMWQTKILQAADTDISALVEIERSSPHRFEFFMGLSGDQPICARTAWAYGKAGGRISHALSVYSCQIRQPNLVKIIFDFLKNGFQEISNSLDLSFEDETVADEKIPFLAYLASVLKNSSYFPFEPPAGSKRFCSLIAGFMRTYHRIPINQDNIVVFPSRAVAIESAFRLFSPRLAIVDEHLTRQLPRSWLTSLAIEDTSMDKSDDQITVIESPHQSDLMIELIKKLKPQVVVTGMAPFEVITSSSFLHLLEVTKEIGCRLFLDISDHFELSSLPASNGVLKYLAENQLPSHAAIICGLVKNKVYSDLEVAFVITEVDAIAKALSKTVEVLEGHTAIISQYYYGCLFHELLAFQLADRHAPAERESEKAKSEEIIGFSSSAVSILKDAELSVTEIDETSLIHMDVDQSFLQIPQSVKAAIFESFVRQNISEAEVDINPSIKQFVWSNYGFPTKSSTGFVYADGSLALFNKLVICCAQEGGTLCLPAGTNGNYVAAAKFLKANVVNIPTESSDGFKLTEKTLTKALESVKKPWVCISGPTVSPTGLVYSNEEMDILLSTCAKFGAKVIIDTSFSGLEYSATSWDLKNALSKMDSSLSVSLLGCLSLNLLSGAIKLGFLVLDQSLIDAFHTLPGLSKPHSTVKYAAKKMLALKEEKASDFLDAVSETIKTLEGRSRRLKEVLQNSGWEVIQPSAGISMVAKPKAYLNKKVKLKAGDGQEIVELTDSNMRDVFLSHTGVCLNSGSWTGIPGYCRFSFALEDSEFDKAIESIAQFKSVLAN</sequence>
<comment type="function">
    <text evidence="2 4">Catalyzes the S-methylmethionine (SMM) biosynthesis from adenosyl-L-homocysteine (AdoMet) and methionine. SMM biosynthesis (by MMT1) and degradation (by HMT-1, HMT-2 and HMT-3) constitute the SMM cycle in plants, which is probably required to achieve short term control of AdoMet level. Also able to catalyze the selenium-methylmethionine (SeMM) from AdoMet and selenium-methionine (SeMet). May play a role in phoem sulfur transport; such function is however not essential.</text>
</comment>
<comment type="catalytic activity">
    <reaction evidence="2">
        <text>L-methionine + S-adenosyl-L-methionine = S-methyl-L-methionine + S-adenosyl-L-homocysteine</text>
        <dbReference type="Rhea" id="RHEA:13761"/>
        <dbReference type="ChEBI" id="CHEBI:57844"/>
        <dbReference type="ChEBI" id="CHEBI:57856"/>
        <dbReference type="ChEBI" id="CHEBI:58252"/>
        <dbReference type="ChEBI" id="CHEBI:59789"/>
        <dbReference type="EC" id="2.1.1.12"/>
    </reaction>
</comment>
<comment type="subunit">
    <text evidence="1">Homotetramer.</text>
</comment>
<comment type="subcellular location">
    <subcellularLocation>
        <location evidence="1">Cytoplasm</location>
    </subcellularLocation>
</comment>
<comment type="tissue specificity">
    <text evidence="3">Expressed in roots, rosette leaves and cauline leaves. Expressed at a lower level in developing seeds.</text>
</comment>
<comment type="similarity">
    <text evidence="5">Belongs to the class I-like SAM-binding methyltransferase superfamily.</text>
</comment>
<accession>Q9LTB2</accession>
<accession>Q9SWR2</accession>
<evidence type="ECO:0000250" key="1"/>
<evidence type="ECO:0000269" key="2">
    <source>
    </source>
</evidence>
<evidence type="ECO:0000269" key="3">
    <source>
    </source>
</evidence>
<evidence type="ECO:0000269" key="4">
    <source>
    </source>
</evidence>
<evidence type="ECO:0000305" key="5"/>
<evidence type="ECO:0007744" key="6">
    <source>
    </source>
</evidence>